<proteinExistence type="predicted"/>
<organism>
    <name type="scientific">Citrus psorosis virus (isolate Spain/P-121)</name>
    <name type="common">CPsV</name>
    <name type="synonym">Citrus ringspot virus</name>
    <dbReference type="NCBI Taxonomy" id="652963"/>
    <lineage>
        <taxon>Viruses</taxon>
        <taxon>Riboviria</taxon>
        <taxon>Orthornavirae</taxon>
        <taxon>Negarnaviricota</taxon>
        <taxon>Haploviricotina</taxon>
        <taxon>Milneviricetes</taxon>
        <taxon>Serpentovirales</taxon>
        <taxon>Aspiviridae</taxon>
        <taxon>Ophiovirus</taxon>
        <taxon>Ophiovirus citri</taxon>
    </lineage>
</organism>
<sequence>MSMASFKSASKRISGTENVTRISANTAINSIVKKGELNVISLKDGNTADLEGINDVLLDYRRILKNEIKTAVSPITMKLKKDEHKKKLKLGTLKSITDKLRKLGGESSQPFIQFYKVQCMYIPLFSRVDGDNGEITVSLIDDGKEAAGQDPIIQSITFDASQMAMVELSMNFFVEKKDMDFIGIHVSAENVPVQDRAYGSINLAFFTNEQSVPMMQEEKKSSYLMIDAVNRPNDITKSSVFKSIGDRVSEEINQKRDDYKKKLIENEKLRRREGKGVKIETETRSSSSSDGETLLEEARKSVSLNISKFLADQRRAPPPPQLEKRTFQWPCGVKMLTMMDTGSSSHYFFSKNITPTSVEMNFGGVAQLEVERAKLSFETFGNKFLLKDVFMFSDQSLGDNILSYTLLKEEGHIDGMRTAGDDVLLEKDGEVVMILDSRDEGRMWIKDDVWAEVTEHGSKSAREYCMKVEKNEIKVE</sequence>
<feature type="chain" id="PRO_0000391482" description="Uncharacterized 54 kDa protein">
    <location>
        <begin position="1"/>
        <end position="476"/>
    </location>
</feature>
<feature type="region of interest" description="Disordered" evidence="1">
    <location>
        <begin position="274"/>
        <end position="294"/>
    </location>
</feature>
<feature type="compositionally biased region" description="Basic and acidic residues" evidence="1">
    <location>
        <begin position="274"/>
        <end position="283"/>
    </location>
</feature>
<name>VP54_CPSVP</name>
<keyword id="KW-1185">Reference proteome</keyword>
<evidence type="ECO:0000256" key="1">
    <source>
        <dbReference type="SAM" id="MobiDB-lite"/>
    </source>
</evidence>
<gene>
    <name type="primary">54K</name>
</gene>
<accession>Q6DN65</accession>
<reference key="1">
    <citation type="journal article" date="2005" name="Arch. Virol.">
        <title>The complete nucleotide sequence of a Spanish isolate of Citrus psorosis virus: comparative analysis with other ophioviruses.</title>
        <authorList>
            <person name="Martin S."/>
            <person name="Lopez C."/>
            <person name="Garcia M.L."/>
            <person name="Naum-Ongania G."/>
            <person name="Grau O."/>
            <person name="Flores R."/>
            <person name="Moreno P."/>
            <person name="Guerri J."/>
        </authorList>
    </citation>
    <scope>NUCLEOTIDE SEQUENCE [GENOMIC RNA]</scope>
</reference>
<dbReference type="EMBL" id="AY654893">
    <property type="protein sequence ID" value="AAT72909.1"/>
    <property type="molecule type" value="Genomic_DNA"/>
</dbReference>
<dbReference type="RefSeq" id="YP_089663.1">
    <property type="nucleotide sequence ID" value="NC_006315.1"/>
</dbReference>
<dbReference type="GeneID" id="3077256"/>
<dbReference type="KEGG" id="vg:3077256"/>
<dbReference type="Proteomes" id="UP000009269">
    <property type="component" value="Genome"/>
</dbReference>
<dbReference type="InterPro" id="IPR021479">
    <property type="entry name" value="30K_MP_C"/>
</dbReference>
<dbReference type="InterPro" id="IPR041344">
    <property type="entry name" value="30K_MP_core"/>
</dbReference>
<dbReference type="Pfam" id="PF11330">
    <property type="entry name" value="30K_MP_C_Ter"/>
    <property type="match status" value="1"/>
</dbReference>
<dbReference type="Pfam" id="PF17644">
    <property type="entry name" value="30K_MP_core"/>
    <property type="match status" value="1"/>
</dbReference>
<protein>
    <recommendedName>
        <fullName>Uncharacterized 54 kDa protein</fullName>
    </recommendedName>
</protein>
<organismHost>
    <name type="scientific">Citrus aurantiifolia</name>
    <name type="common">Key lime</name>
    <name type="synonym">Limonia aurantifolia</name>
    <dbReference type="NCBI Taxonomy" id="159033"/>
</organismHost>
<organismHost>
    <name type="scientific">Citrus limon</name>
    <name type="common">Lemon</name>
    <name type="synonym">Citrus medica var. limon</name>
    <dbReference type="NCBI Taxonomy" id="2708"/>
</organismHost>
<organismHost>
    <name type="scientific">Citrus paradisi</name>
    <name type="common">Grapefruit</name>
    <dbReference type="NCBI Taxonomy" id="37656"/>
</organismHost>